<keyword id="KW-0325">Glycoprotein</keyword>
<keyword id="KW-0472">Membrane</keyword>
<keyword id="KW-1185">Reference proteome</keyword>
<keyword id="KW-0732">Signal</keyword>
<keyword id="KW-0812">Transmembrane</keyword>
<keyword id="KW-1133">Transmembrane helix</keyword>
<evidence type="ECO:0000250" key="1"/>
<evidence type="ECO:0000255" key="2"/>
<evidence type="ECO:0000305" key="3"/>
<sequence>MALMGVQLVVSLLAVSIMQRMAPHLSFARWLLCNGSLLKFRHPSEGELCALAGKQIPKTSRRDRRQNGHGESKPLTVPKDIDLHLESTPVNVMDALVLRFFVEYQWLIDFAVYATGIYLFTEGYYSVVDASKEVNIASIWCVLTVLFCLRTLYLLMSHYFLSEEGGERSVCLAFGFLSLLIAMLVLVVREDYLEFGLEPGFTSLFDNFEVFARKQGYEWSVPFTKLSVKLGLAVICAFIGALLAFPGLRLAQTHLDAVQMNADRPMIQILLHMSFLSPLVIIVMWIKPIARDFLGNAPMGKTSVTLLSSSAFSSVRLWTIVVLCVLRLLLTRYHLQAYLNLAQKWVEQMKKEAGRIAAIDIQRKVTRIFCYLTVVTLQYLIPILLVLFSTLALKSLGDFSWGLGAETPGVTPAPIIPSSTPPPVPGPEDDEDMEDMEEDIQATVAHLTELFSALRALLTPIFFRGIFAFLTWWVAACQLISSLFGIYFHQYLMHN</sequence>
<comment type="function">
    <text evidence="1">May play a role in protection against oxidative stress.</text>
</comment>
<comment type="subcellular location">
    <subcellularLocation>
        <location evidence="3">Membrane</location>
        <topology evidence="3">Multi-pass membrane protein</topology>
    </subcellularLocation>
</comment>
<comment type="similarity">
    <text evidence="3">Belongs to the TMEM161 family.</text>
</comment>
<comment type="sequence caution" evidence="3">
    <conflict type="erroneous gene model prediction">
        <sequence resource="EMBL-CDS" id="CAK05125"/>
    </conflict>
</comment>
<reference key="1">
    <citation type="journal article" date="2013" name="Nature">
        <title>The zebrafish reference genome sequence and its relationship to the human genome.</title>
        <authorList>
            <person name="Howe K."/>
            <person name="Clark M.D."/>
            <person name="Torroja C.F."/>
            <person name="Torrance J."/>
            <person name="Berthelot C."/>
            <person name="Muffato M."/>
            <person name="Collins J.E."/>
            <person name="Humphray S."/>
            <person name="McLaren K."/>
            <person name="Matthews L."/>
            <person name="McLaren S."/>
            <person name="Sealy I."/>
            <person name="Caccamo M."/>
            <person name="Churcher C."/>
            <person name="Scott C."/>
            <person name="Barrett J.C."/>
            <person name="Koch R."/>
            <person name="Rauch G.J."/>
            <person name="White S."/>
            <person name="Chow W."/>
            <person name="Kilian B."/>
            <person name="Quintais L.T."/>
            <person name="Guerra-Assuncao J.A."/>
            <person name="Zhou Y."/>
            <person name="Gu Y."/>
            <person name="Yen J."/>
            <person name="Vogel J.H."/>
            <person name="Eyre T."/>
            <person name="Redmond S."/>
            <person name="Banerjee R."/>
            <person name="Chi J."/>
            <person name="Fu B."/>
            <person name="Langley E."/>
            <person name="Maguire S.F."/>
            <person name="Laird G.K."/>
            <person name="Lloyd D."/>
            <person name="Kenyon E."/>
            <person name="Donaldson S."/>
            <person name="Sehra H."/>
            <person name="Almeida-King J."/>
            <person name="Loveland J."/>
            <person name="Trevanion S."/>
            <person name="Jones M."/>
            <person name="Quail M."/>
            <person name="Willey D."/>
            <person name="Hunt A."/>
            <person name="Burton J."/>
            <person name="Sims S."/>
            <person name="McLay K."/>
            <person name="Plumb B."/>
            <person name="Davis J."/>
            <person name="Clee C."/>
            <person name="Oliver K."/>
            <person name="Clark R."/>
            <person name="Riddle C."/>
            <person name="Elliot D."/>
            <person name="Threadgold G."/>
            <person name="Harden G."/>
            <person name="Ware D."/>
            <person name="Begum S."/>
            <person name="Mortimore B."/>
            <person name="Kerry G."/>
            <person name="Heath P."/>
            <person name="Phillimore B."/>
            <person name="Tracey A."/>
            <person name="Corby N."/>
            <person name="Dunn M."/>
            <person name="Johnson C."/>
            <person name="Wood J."/>
            <person name="Clark S."/>
            <person name="Pelan S."/>
            <person name="Griffiths G."/>
            <person name="Smith M."/>
            <person name="Glithero R."/>
            <person name="Howden P."/>
            <person name="Barker N."/>
            <person name="Lloyd C."/>
            <person name="Stevens C."/>
            <person name="Harley J."/>
            <person name="Holt K."/>
            <person name="Panagiotidis G."/>
            <person name="Lovell J."/>
            <person name="Beasley H."/>
            <person name="Henderson C."/>
            <person name="Gordon D."/>
            <person name="Auger K."/>
            <person name="Wright D."/>
            <person name="Collins J."/>
            <person name="Raisen C."/>
            <person name="Dyer L."/>
            <person name="Leung K."/>
            <person name="Robertson L."/>
            <person name="Ambridge K."/>
            <person name="Leongamornlert D."/>
            <person name="McGuire S."/>
            <person name="Gilderthorp R."/>
            <person name="Griffiths C."/>
            <person name="Manthravadi D."/>
            <person name="Nichol S."/>
            <person name="Barker G."/>
            <person name="Whitehead S."/>
            <person name="Kay M."/>
            <person name="Brown J."/>
            <person name="Murnane C."/>
            <person name="Gray E."/>
            <person name="Humphries M."/>
            <person name="Sycamore N."/>
            <person name="Barker D."/>
            <person name="Saunders D."/>
            <person name="Wallis J."/>
            <person name="Babbage A."/>
            <person name="Hammond S."/>
            <person name="Mashreghi-Mohammadi M."/>
            <person name="Barr L."/>
            <person name="Martin S."/>
            <person name="Wray P."/>
            <person name="Ellington A."/>
            <person name="Matthews N."/>
            <person name="Ellwood M."/>
            <person name="Woodmansey R."/>
            <person name="Clark G."/>
            <person name="Cooper J."/>
            <person name="Tromans A."/>
            <person name="Grafham D."/>
            <person name="Skuce C."/>
            <person name="Pandian R."/>
            <person name="Andrews R."/>
            <person name="Harrison E."/>
            <person name="Kimberley A."/>
            <person name="Garnett J."/>
            <person name="Fosker N."/>
            <person name="Hall R."/>
            <person name="Garner P."/>
            <person name="Kelly D."/>
            <person name="Bird C."/>
            <person name="Palmer S."/>
            <person name="Gehring I."/>
            <person name="Berger A."/>
            <person name="Dooley C.M."/>
            <person name="Ersan-Urun Z."/>
            <person name="Eser C."/>
            <person name="Geiger H."/>
            <person name="Geisler M."/>
            <person name="Karotki L."/>
            <person name="Kirn A."/>
            <person name="Konantz J."/>
            <person name="Konantz M."/>
            <person name="Oberlander M."/>
            <person name="Rudolph-Geiger S."/>
            <person name="Teucke M."/>
            <person name="Lanz C."/>
            <person name="Raddatz G."/>
            <person name="Osoegawa K."/>
            <person name="Zhu B."/>
            <person name="Rapp A."/>
            <person name="Widaa S."/>
            <person name="Langford C."/>
            <person name="Yang F."/>
            <person name="Schuster S.C."/>
            <person name="Carter N.P."/>
            <person name="Harrow J."/>
            <person name="Ning Z."/>
            <person name="Herrero J."/>
            <person name="Searle S.M."/>
            <person name="Enright A."/>
            <person name="Geisler R."/>
            <person name="Plasterk R.H."/>
            <person name="Lee C."/>
            <person name="Westerfield M."/>
            <person name="de Jong P.J."/>
            <person name="Zon L.I."/>
            <person name="Postlethwait J.H."/>
            <person name="Nusslein-Volhard C."/>
            <person name="Hubbard T.J."/>
            <person name="Roest Crollius H."/>
            <person name="Rogers J."/>
            <person name="Stemple D.L."/>
        </authorList>
    </citation>
    <scope>NUCLEOTIDE SEQUENCE [LARGE SCALE GENOMIC DNA]</scope>
    <source>
        <strain>Tuebingen</strain>
    </source>
</reference>
<reference key="2">
    <citation type="submission" date="2006-08" db="EMBL/GenBank/DDBJ databases">
        <authorList>
            <consortium name="NIH - Zebrafish Gene Collection (ZGC) project"/>
        </authorList>
    </citation>
    <scope>NUCLEOTIDE SEQUENCE [LARGE SCALE MRNA]</scope>
    <source>
        <tissue>Embryo</tissue>
    </source>
</reference>
<name>T161A_DANRE</name>
<feature type="signal peptide" evidence="2">
    <location>
        <begin position="1"/>
        <end position="28"/>
    </location>
</feature>
<feature type="chain" id="PRO_0000288086" description="Transmembrane protein 161A">
    <location>
        <begin position="29"/>
        <end position="495"/>
    </location>
</feature>
<feature type="topological domain" description="Extracellular" evidence="2">
    <location>
        <begin position="29"/>
        <end position="99"/>
    </location>
</feature>
<feature type="transmembrane region" description="Helical" evidence="2">
    <location>
        <begin position="100"/>
        <end position="120"/>
    </location>
</feature>
<feature type="topological domain" description="Cytoplasmic" evidence="2">
    <location>
        <begin position="121"/>
        <end position="135"/>
    </location>
</feature>
<feature type="transmembrane region" description="Helical" evidence="2">
    <location>
        <begin position="136"/>
        <end position="156"/>
    </location>
</feature>
<feature type="topological domain" description="Extracellular" evidence="2">
    <location>
        <begin position="157"/>
        <end position="167"/>
    </location>
</feature>
<feature type="transmembrane region" description="Helical" evidence="2">
    <location>
        <begin position="168"/>
        <end position="188"/>
    </location>
</feature>
<feature type="topological domain" description="Cytoplasmic" evidence="2">
    <location>
        <begin position="189"/>
        <end position="227"/>
    </location>
</feature>
<feature type="transmembrane region" description="Helical" evidence="2">
    <location>
        <begin position="228"/>
        <end position="248"/>
    </location>
</feature>
<feature type="topological domain" description="Extracellular" evidence="2">
    <location>
        <begin position="249"/>
        <end position="265"/>
    </location>
</feature>
<feature type="transmembrane region" description="Helical" evidence="2">
    <location>
        <begin position="266"/>
        <end position="286"/>
    </location>
</feature>
<feature type="topological domain" description="Cytoplasmic" evidence="2">
    <location>
        <begin position="287"/>
        <end position="305"/>
    </location>
</feature>
<feature type="transmembrane region" description="Helical" evidence="2">
    <location>
        <begin position="306"/>
        <end position="326"/>
    </location>
</feature>
<feature type="topological domain" description="Extracellular" evidence="2">
    <location>
        <begin position="327"/>
        <end position="367"/>
    </location>
</feature>
<feature type="transmembrane region" description="Helical" evidence="2">
    <location>
        <begin position="368"/>
        <end position="388"/>
    </location>
</feature>
<feature type="topological domain" description="Cytoplasmic" evidence="2">
    <location>
        <begin position="389"/>
        <end position="465"/>
    </location>
</feature>
<feature type="transmembrane region" description="Helical" evidence="2">
    <location>
        <begin position="466"/>
        <end position="486"/>
    </location>
</feature>
<feature type="topological domain" description="Extracellular" evidence="2">
    <location>
        <begin position="487"/>
        <end position="495"/>
    </location>
</feature>
<feature type="glycosylation site" description="N-linked (GlcNAc...) asparagine" evidence="2">
    <location>
        <position position="34"/>
    </location>
</feature>
<feature type="sequence conflict" description="In Ref. 2; AAI21759." evidence="3" ref="2">
    <original>V</original>
    <variation>F</variation>
    <location>
        <position position="325"/>
    </location>
</feature>
<feature type="sequence conflict" description="In Ref. 2; AAI21759." evidence="3" ref="2">
    <original>T</original>
    <variation>S</variation>
    <location>
        <position position="411"/>
    </location>
</feature>
<proteinExistence type="evidence at transcript level"/>
<dbReference type="EMBL" id="BX664610">
    <property type="protein sequence ID" value="CAK05125.1"/>
    <property type="status" value="ALT_SEQ"/>
    <property type="molecule type" value="Genomic_DNA"/>
</dbReference>
<dbReference type="EMBL" id="BC121758">
    <property type="protein sequence ID" value="AAI21759.1"/>
    <property type="molecule type" value="mRNA"/>
</dbReference>
<dbReference type="RefSeq" id="NP_001037782.1">
    <property type="nucleotide sequence ID" value="NM_001044317.1"/>
</dbReference>
<dbReference type="FunCoup" id="Q0V947">
    <property type="interactions" value="2370"/>
</dbReference>
<dbReference type="STRING" id="7955.ENSDARP00000007148"/>
<dbReference type="GlyCosmos" id="Q0V947">
    <property type="glycosylation" value="1 site, No reported glycans"/>
</dbReference>
<dbReference type="PaxDb" id="7955-ENSDARP00000007148"/>
<dbReference type="Ensembl" id="ENSDART00000083879">
    <property type="protein sequence ID" value="ENSDARP00000078314"/>
    <property type="gene ID" value="ENSDARG00000012790"/>
</dbReference>
<dbReference type="GeneID" id="492692"/>
<dbReference type="KEGG" id="dre:492692"/>
<dbReference type="AGR" id="ZFIN:ZDB-GENE-041111-267"/>
<dbReference type="CTD" id="54929"/>
<dbReference type="ZFIN" id="ZDB-GENE-041111-267">
    <property type="gene designation" value="tmem161a"/>
</dbReference>
<dbReference type="eggNOG" id="KOG3978">
    <property type="taxonomic scope" value="Eukaryota"/>
</dbReference>
<dbReference type="HOGENOM" id="CLU_027277_0_0_1"/>
<dbReference type="InParanoid" id="Q0V947"/>
<dbReference type="OrthoDB" id="784140at2759"/>
<dbReference type="PhylomeDB" id="Q0V947"/>
<dbReference type="PRO" id="PR:Q0V947"/>
<dbReference type="Proteomes" id="UP000000437">
    <property type="component" value="Chromosome 22"/>
</dbReference>
<dbReference type="Bgee" id="ENSDARG00000012790">
    <property type="expression patterns" value="Expressed in mature ovarian follicle and 29 other cell types or tissues"/>
</dbReference>
<dbReference type="ExpressionAtlas" id="Q0V947">
    <property type="expression patterns" value="baseline and differential"/>
</dbReference>
<dbReference type="GO" id="GO:0016020">
    <property type="term" value="C:membrane"/>
    <property type="evidence" value="ECO:0007669"/>
    <property type="project" value="UniProtKB-SubCell"/>
</dbReference>
<dbReference type="InterPro" id="IPR019395">
    <property type="entry name" value="Transmembrane_161A/B"/>
</dbReference>
<dbReference type="PANTHER" id="PTHR13624">
    <property type="entry name" value="RE42071P"/>
    <property type="match status" value="1"/>
</dbReference>
<dbReference type="PANTHER" id="PTHR13624:SF4">
    <property type="entry name" value="TRANSMEMBRANE PROTEIN 161A"/>
    <property type="match status" value="1"/>
</dbReference>
<dbReference type="Pfam" id="PF10268">
    <property type="entry name" value="Tmemb_161AB"/>
    <property type="match status" value="1"/>
</dbReference>
<gene>
    <name type="primary">tmem161a</name>
    <name type="ORF">im:7149790</name>
    <name type="ORF">si:dkey-11n6.2</name>
    <name type="ORF">zgc:152766</name>
</gene>
<organism>
    <name type="scientific">Danio rerio</name>
    <name type="common">Zebrafish</name>
    <name type="synonym">Brachydanio rerio</name>
    <dbReference type="NCBI Taxonomy" id="7955"/>
    <lineage>
        <taxon>Eukaryota</taxon>
        <taxon>Metazoa</taxon>
        <taxon>Chordata</taxon>
        <taxon>Craniata</taxon>
        <taxon>Vertebrata</taxon>
        <taxon>Euteleostomi</taxon>
        <taxon>Actinopterygii</taxon>
        <taxon>Neopterygii</taxon>
        <taxon>Teleostei</taxon>
        <taxon>Ostariophysi</taxon>
        <taxon>Cypriniformes</taxon>
        <taxon>Danionidae</taxon>
        <taxon>Danioninae</taxon>
        <taxon>Danio</taxon>
    </lineage>
</organism>
<protein>
    <recommendedName>
        <fullName>Transmembrane protein 161A</fullName>
    </recommendedName>
</protein>
<accession>Q0V947</accession>
<accession>Q1LVH8</accession>
<accession>Q567V8</accession>